<organism>
    <name type="scientific">Oryza sativa subsp. japonica</name>
    <name type="common">Rice</name>
    <dbReference type="NCBI Taxonomy" id="39947"/>
    <lineage>
        <taxon>Eukaryota</taxon>
        <taxon>Viridiplantae</taxon>
        <taxon>Streptophyta</taxon>
        <taxon>Embryophyta</taxon>
        <taxon>Tracheophyta</taxon>
        <taxon>Spermatophyta</taxon>
        <taxon>Magnoliopsida</taxon>
        <taxon>Liliopsida</taxon>
        <taxon>Poales</taxon>
        <taxon>Poaceae</taxon>
        <taxon>BOP clade</taxon>
        <taxon>Oryzoideae</taxon>
        <taxon>Oryzeae</taxon>
        <taxon>Oryzinae</taxon>
        <taxon>Oryza</taxon>
        <taxon>Oryza sativa</taxon>
    </lineage>
</organism>
<dbReference type="EMBL" id="AL663000">
    <property type="protein sequence ID" value="CAD41599.3"/>
    <property type="status" value="ALT_SEQ"/>
    <property type="molecule type" value="Genomic_DNA"/>
</dbReference>
<dbReference type="EMBL" id="AP008210">
    <property type="protein sequence ID" value="BAF15407.1"/>
    <property type="molecule type" value="Genomic_DNA"/>
</dbReference>
<dbReference type="EMBL" id="AP014960">
    <property type="protein sequence ID" value="BAS90376.1"/>
    <property type="molecule type" value="Genomic_DNA"/>
</dbReference>
<dbReference type="EMBL" id="AK070602">
    <property type="protein sequence ID" value="BAG92052.1"/>
    <property type="molecule type" value="mRNA"/>
</dbReference>
<dbReference type="RefSeq" id="NP_001406664.1">
    <property type="nucleotide sequence ID" value="NM_001419735.1"/>
</dbReference>
<dbReference type="RefSeq" id="XP_015635334.1">
    <property type="nucleotide sequence ID" value="XM_015779848.1"/>
</dbReference>
<dbReference type="SMR" id="Q7XU31"/>
<dbReference type="FunCoup" id="Q7XU31">
    <property type="interactions" value="91"/>
</dbReference>
<dbReference type="STRING" id="39947.Q7XU31"/>
<dbReference type="PaxDb" id="39947-Q7XU31"/>
<dbReference type="EnsemblPlants" id="Os04t0550800-01">
    <property type="protein sequence ID" value="Os04t0550800-01"/>
    <property type="gene ID" value="Os04g0550800"/>
</dbReference>
<dbReference type="GeneID" id="4336593"/>
<dbReference type="Gramene" id="Os04t0550800-01">
    <property type="protein sequence ID" value="Os04t0550800-01"/>
    <property type="gene ID" value="Os04g0550800"/>
</dbReference>
<dbReference type="KEGG" id="dosa:Os04g0550800"/>
<dbReference type="eggNOG" id="KOG0223">
    <property type="taxonomic scope" value="Eukaryota"/>
</dbReference>
<dbReference type="HOGENOM" id="CLU_020019_3_4_1"/>
<dbReference type="InParanoid" id="Q7XU31"/>
<dbReference type="OMA" id="VPTAMFY"/>
<dbReference type="OrthoDB" id="3222at2759"/>
<dbReference type="Proteomes" id="UP000000763">
    <property type="component" value="Chromosome 4"/>
</dbReference>
<dbReference type="Proteomes" id="UP000059680">
    <property type="component" value="Chromosome 4"/>
</dbReference>
<dbReference type="GO" id="GO:0016020">
    <property type="term" value="C:membrane"/>
    <property type="evidence" value="ECO:0000318"/>
    <property type="project" value="GO_Central"/>
</dbReference>
<dbReference type="GO" id="GO:0005774">
    <property type="term" value="C:vacuolar membrane"/>
    <property type="evidence" value="ECO:0007669"/>
    <property type="project" value="UniProtKB-SubCell"/>
</dbReference>
<dbReference type="GO" id="GO:0015250">
    <property type="term" value="F:water channel activity"/>
    <property type="evidence" value="ECO:0000318"/>
    <property type="project" value="GO_Central"/>
</dbReference>
<dbReference type="GO" id="GO:0006833">
    <property type="term" value="P:water transport"/>
    <property type="evidence" value="ECO:0000318"/>
    <property type="project" value="GO_Central"/>
</dbReference>
<dbReference type="FunFam" id="1.20.1080.10:FF:000017">
    <property type="entry name" value="Probable aquaporin TIP5-1"/>
    <property type="match status" value="1"/>
</dbReference>
<dbReference type="Gene3D" id="1.20.1080.10">
    <property type="entry name" value="Glycerol uptake facilitator protein"/>
    <property type="match status" value="1"/>
</dbReference>
<dbReference type="InterPro" id="IPR023271">
    <property type="entry name" value="Aquaporin-like"/>
</dbReference>
<dbReference type="InterPro" id="IPR034294">
    <property type="entry name" value="Aquaporin_transptr"/>
</dbReference>
<dbReference type="InterPro" id="IPR000425">
    <property type="entry name" value="MIP"/>
</dbReference>
<dbReference type="InterPro" id="IPR022357">
    <property type="entry name" value="MIP_CS"/>
</dbReference>
<dbReference type="PANTHER" id="PTHR45665:SF27">
    <property type="entry name" value="AQUAPORIN TIP5-1-RELATED"/>
    <property type="match status" value="1"/>
</dbReference>
<dbReference type="PANTHER" id="PTHR45665">
    <property type="entry name" value="AQUAPORIN-8"/>
    <property type="match status" value="1"/>
</dbReference>
<dbReference type="Pfam" id="PF00230">
    <property type="entry name" value="MIP"/>
    <property type="match status" value="1"/>
</dbReference>
<dbReference type="PRINTS" id="PR00783">
    <property type="entry name" value="MINTRINSICP"/>
</dbReference>
<dbReference type="SUPFAM" id="SSF81338">
    <property type="entry name" value="Aquaporin-like"/>
    <property type="match status" value="1"/>
</dbReference>
<dbReference type="PROSITE" id="PS00221">
    <property type="entry name" value="MIP"/>
    <property type="match status" value="1"/>
</dbReference>
<accession>Q7XU31</accession>
<accession>B7EI55</accession>
<accession>Q0JB80</accession>
<gene>
    <name type="primary">TIP5;1</name>
    <name type="ordered locus">Os04g0550800</name>
    <name type="ordered locus">LOC_Os04g46490</name>
    <name type="ORF">OSJNBb0034G17.11</name>
</gene>
<proteinExistence type="evidence at transcript level"/>
<protein>
    <recommendedName>
        <fullName>Probable aquaporin TIP5-1</fullName>
    </recommendedName>
    <alternativeName>
        <fullName>Tonoplast intrinsic protein 5-1</fullName>
        <shortName>OsTIP5;1</shortName>
    </alternativeName>
</protein>
<evidence type="ECO:0000250" key="1"/>
<evidence type="ECO:0000255" key="2"/>
<evidence type="ECO:0000269" key="3">
    <source>
    </source>
</evidence>
<evidence type="ECO:0000305" key="4"/>
<name>TIP51_ORYSJ</name>
<comment type="function">
    <text evidence="1">Aquaporins facilitate the transport of water and small neutral solutes across cell membranes. May be involved in transport from the vacuolar compartment to the cytoplasm (By similarity).</text>
</comment>
<comment type="subcellular location">
    <subcellularLocation>
        <location evidence="1">Vacuole membrane</location>
        <topology evidence="1">Multi-pass membrane protein</topology>
    </subcellularLocation>
    <text>Tonoplast.</text>
</comment>
<comment type="tissue specificity">
    <text evidence="3">Expressed in leaves and anthers, and at lower levels in roots.</text>
</comment>
<comment type="domain">
    <text>Aquaporins contain two tandem repeats each containing three membrane-spanning domains and a pore-forming loop with the signature motif Asn-Pro-Ala (NPA).</text>
</comment>
<comment type="similarity">
    <text evidence="4">Belongs to the MIP/aquaporin (TC 1.A.8) family. TIP (TC 1.A.8.10) subfamily.</text>
</comment>
<comment type="sequence caution" evidence="4">
    <conflict type="erroneous gene model prediction">
        <sequence resource="EMBL-CDS" id="CAD41599"/>
    </conflict>
</comment>
<reference key="1">
    <citation type="journal article" date="2002" name="Nature">
        <title>Sequence and analysis of rice chromosome 4.</title>
        <authorList>
            <person name="Feng Q."/>
            <person name="Zhang Y."/>
            <person name="Hao P."/>
            <person name="Wang S."/>
            <person name="Fu G."/>
            <person name="Huang Y."/>
            <person name="Li Y."/>
            <person name="Zhu J."/>
            <person name="Liu Y."/>
            <person name="Hu X."/>
            <person name="Jia P."/>
            <person name="Zhang Y."/>
            <person name="Zhao Q."/>
            <person name="Ying K."/>
            <person name="Yu S."/>
            <person name="Tang Y."/>
            <person name="Weng Q."/>
            <person name="Zhang L."/>
            <person name="Lu Y."/>
            <person name="Mu J."/>
            <person name="Lu Y."/>
            <person name="Zhang L.S."/>
            <person name="Yu Z."/>
            <person name="Fan D."/>
            <person name="Liu X."/>
            <person name="Lu T."/>
            <person name="Li C."/>
            <person name="Wu Y."/>
            <person name="Sun T."/>
            <person name="Lei H."/>
            <person name="Li T."/>
            <person name="Hu H."/>
            <person name="Guan J."/>
            <person name="Wu M."/>
            <person name="Zhang R."/>
            <person name="Zhou B."/>
            <person name="Chen Z."/>
            <person name="Chen L."/>
            <person name="Jin Z."/>
            <person name="Wang R."/>
            <person name="Yin H."/>
            <person name="Cai Z."/>
            <person name="Ren S."/>
            <person name="Lv G."/>
            <person name="Gu W."/>
            <person name="Zhu G."/>
            <person name="Tu Y."/>
            <person name="Jia J."/>
            <person name="Zhang Y."/>
            <person name="Chen J."/>
            <person name="Kang H."/>
            <person name="Chen X."/>
            <person name="Shao C."/>
            <person name="Sun Y."/>
            <person name="Hu Q."/>
            <person name="Zhang X."/>
            <person name="Zhang W."/>
            <person name="Wang L."/>
            <person name="Ding C."/>
            <person name="Sheng H."/>
            <person name="Gu J."/>
            <person name="Chen S."/>
            <person name="Ni L."/>
            <person name="Zhu F."/>
            <person name="Chen W."/>
            <person name="Lan L."/>
            <person name="Lai Y."/>
            <person name="Cheng Z."/>
            <person name="Gu M."/>
            <person name="Jiang J."/>
            <person name="Li J."/>
            <person name="Hong G."/>
            <person name="Xue Y."/>
            <person name="Han B."/>
        </authorList>
    </citation>
    <scope>NUCLEOTIDE SEQUENCE [LARGE SCALE GENOMIC DNA]</scope>
    <source>
        <strain>cv. Nipponbare</strain>
    </source>
</reference>
<reference key="2">
    <citation type="journal article" date="2005" name="Nature">
        <title>The map-based sequence of the rice genome.</title>
        <authorList>
            <consortium name="International rice genome sequencing project (IRGSP)"/>
        </authorList>
    </citation>
    <scope>NUCLEOTIDE SEQUENCE [LARGE SCALE GENOMIC DNA]</scope>
    <source>
        <strain>cv. Nipponbare</strain>
    </source>
</reference>
<reference key="3">
    <citation type="journal article" date="2008" name="Nucleic Acids Res.">
        <title>The rice annotation project database (RAP-DB): 2008 update.</title>
        <authorList>
            <consortium name="The rice annotation project (RAP)"/>
        </authorList>
    </citation>
    <scope>GENOME REANNOTATION</scope>
    <source>
        <strain>cv. Nipponbare</strain>
    </source>
</reference>
<reference key="4">
    <citation type="journal article" date="2013" name="Rice">
        <title>Improvement of the Oryza sativa Nipponbare reference genome using next generation sequence and optical map data.</title>
        <authorList>
            <person name="Kawahara Y."/>
            <person name="de la Bastide M."/>
            <person name="Hamilton J.P."/>
            <person name="Kanamori H."/>
            <person name="McCombie W.R."/>
            <person name="Ouyang S."/>
            <person name="Schwartz D.C."/>
            <person name="Tanaka T."/>
            <person name="Wu J."/>
            <person name="Zhou S."/>
            <person name="Childs K.L."/>
            <person name="Davidson R.M."/>
            <person name="Lin H."/>
            <person name="Quesada-Ocampo L."/>
            <person name="Vaillancourt B."/>
            <person name="Sakai H."/>
            <person name="Lee S.S."/>
            <person name="Kim J."/>
            <person name="Numa H."/>
            <person name="Itoh T."/>
            <person name="Buell C.R."/>
            <person name="Matsumoto T."/>
        </authorList>
    </citation>
    <scope>GENOME REANNOTATION</scope>
    <source>
        <strain>cv. Nipponbare</strain>
    </source>
</reference>
<reference key="5">
    <citation type="journal article" date="2003" name="Science">
        <title>Collection, mapping, and annotation of over 28,000 cDNA clones from japonica rice.</title>
        <authorList>
            <consortium name="The rice full-length cDNA consortium"/>
        </authorList>
    </citation>
    <scope>NUCLEOTIDE SEQUENCE [LARGE SCALE MRNA]</scope>
    <source>
        <strain>cv. Nipponbare</strain>
    </source>
</reference>
<reference key="6">
    <citation type="journal article" date="2005" name="Plant Cell Physiol.">
        <title>Identification of 33 rice aquaporin genes and analysis of their expression and function.</title>
        <authorList>
            <person name="Sakurai J."/>
            <person name="Ishikawa F."/>
            <person name="Yamaguchi T."/>
            <person name="Uemura M."/>
            <person name="Maeshima M."/>
        </authorList>
    </citation>
    <scope>NOMENCLATURE</scope>
    <scope>TISSUE SPECIFICITY</scope>
</reference>
<sequence>MANICANMKRCFSPPALRAYFAEFFSTFLFVFIAVGSTISARMLTPDETSDASSLMATAVAQAFGLFAAVFIAADVSGGHVNPAVTFAYAIGGHITVPSAIFYWASQMLGSTFACLVLHYISAGQAVPTTRIAVEMTGFGAGILEGVLTFMVVYTVHVAGDPRGGGFGGRKGPAATALGALVVGAVTGACVLAAGSLTGASMNPARSFGPAVVSGHYSNQAVYWAGPMVGAAVAALVHQALVFPTVPEPAPAPATNESARHGSVQTVVV</sequence>
<keyword id="KW-0472">Membrane</keyword>
<keyword id="KW-1185">Reference proteome</keyword>
<keyword id="KW-0677">Repeat</keyword>
<keyword id="KW-0812">Transmembrane</keyword>
<keyword id="KW-1133">Transmembrane helix</keyword>
<keyword id="KW-0813">Transport</keyword>
<keyword id="KW-0926">Vacuole</keyword>
<feature type="chain" id="PRO_0000064030" description="Probable aquaporin TIP5-1">
    <location>
        <begin position="1"/>
        <end position="269"/>
    </location>
</feature>
<feature type="transmembrane region" description="Helical; Name=1" evidence="2">
    <location>
        <begin position="19"/>
        <end position="39"/>
    </location>
</feature>
<feature type="transmembrane region" description="Helical; Name=2" evidence="2">
    <location>
        <begin position="54"/>
        <end position="74"/>
    </location>
</feature>
<feature type="transmembrane region" description="Helical; Name=3" evidence="2">
    <location>
        <begin position="84"/>
        <end position="104"/>
    </location>
</feature>
<feature type="transmembrane region" description="Helical; Name=4" evidence="2">
    <location>
        <begin position="139"/>
        <end position="159"/>
    </location>
</feature>
<feature type="transmembrane region" description="Helical; Name=5" evidence="2">
    <location>
        <begin position="177"/>
        <end position="197"/>
    </location>
</feature>
<feature type="transmembrane region" description="Helical; Name=6" evidence="2">
    <location>
        <begin position="223"/>
        <end position="243"/>
    </location>
</feature>
<feature type="short sequence motif" description="NPA 1">
    <location>
        <begin position="82"/>
        <end position="84"/>
    </location>
</feature>
<feature type="short sequence motif" description="NPA 2">
    <location>
        <begin position="203"/>
        <end position="205"/>
    </location>
</feature>